<feature type="chain" id="PRO_0000437337" description="Sulfhydrylase FUB7">
    <location>
        <begin position="1"/>
        <end position="433"/>
    </location>
</feature>
<feature type="modified residue" description="N6-(pyridoxal phosphate)lysine" evidence="1">
    <location>
        <position position="211"/>
    </location>
</feature>
<proteinExistence type="evidence at protein level"/>
<evidence type="ECO:0000250" key="1">
    <source>
        <dbReference type="UniProtKB" id="P06721"/>
    </source>
</evidence>
<evidence type="ECO:0000250" key="2">
    <source>
        <dbReference type="UniProtKB" id="P50125"/>
    </source>
</evidence>
<evidence type="ECO:0000250" key="3">
    <source>
        <dbReference type="UniProtKB" id="S0DUX5"/>
    </source>
</evidence>
<evidence type="ECO:0000269" key="4">
    <source>
    </source>
</evidence>
<evidence type="ECO:0000269" key="5">
    <source>
    </source>
</evidence>
<evidence type="ECO:0000269" key="6">
    <source>
    </source>
</evidence>
<evidence type="ECO:0000269" key="7">
    <source>
    </source>
</evidence>
<evidence type="ECO:0000269" key="8">
    <source>
    </source>
</evidence>
<evidence type="ECO:0000269" key="9">
    <source>
    </source>
</evidence>
<evidence type="ECO:0000269" key="10">
    <source>
    </source>
</evidence>
<evidence type="ECO:0000269" key="11">
    <source>
    </source>
</evidence>
<evidence type="ECO:0000269" key="12">
    <source>
    </source>
</evidence>
<evidence type="ECO:0000303" key="13">
    <source>
    </source>
</evidence>
<evidence type="ECO:0000305" key="14"/>
<evidence type="ECO:0000305" key="15">
    <source>
    </source>
</evidence>
<dbReference type="EC" id="2.5.1.-" evidence="15"/>
<dbReference type="EMBL" id="CM000580">
    <property type="protein sequence ID" value="EWG54273.1"/>
    <property type="molecule type" value="Genomic_DNA"/>
</dbReference>
<dbReference type="RefSeq" id="XP_018760464.1">
    <property type="nucleotide sequence ID" value="XM_018901869.1"/>
</dbReference>
<dbReference type="SMR" id="W7MS09"/>
<dbReference type="STRING" id="334819.W7MS09"/>
<dbReference type="EnsemblFungi" id="FVEG_12529T0">
    <property type="protein sequence ID" value="FVEG_12529T0"/>
    <property type="gene ID" value="FVEG_12529"/>
</dbReference>
<dbReference type="GeneID" id="30069962"/>
<dbReference type="KEGG" id="fvr:FVEG_12529"/>
<dbReference type="VEuPathDB" id="FungiDB:FVEG_12529"/>
<dbReference type="eggNOG" id="KOG0053">
    <property type="taxonomic scope" value="Eukaryota"/>
</dbReference>
<dbReference type="HOGENOM" id="CLU_018986_4_0_1"/>
<dbReference type="OMA" id="TTCVQGG"/>
<dbReference type="OrthoDB" id="69818at110618"/>
<dbReference type="PHI-base" id="PHI:3385"/>
<dbReference type="Proteomes" id="UP000009096">
    <property type="component" value="Chromosome 3"/>
</dbReference>
<dbReference type="GO" id="GO:0005737">
    <property type="term" value="C:cytoplasm"/>
    <property type="evidence" value="ECO:0007669"/>
    <property type="project" value="TreeGrafter"/>
</dbReference>
<dbReference type="GO" id="GO:0004124">
    <property type="term" value="F:cysteine synthase activity"/>
    <property type="evidence" value="ECO:0007669"/>
    <property type="project" value="TreeGrafter"/>
</dbReference>
<dbReference type="GO" id="GO:0003961">
    <property type="term" value="F:O-acetylhomoserine aminocarboxypropyltransferase activity"/>
    <property type="evidence" value="ECO:0007669"/>
    <property type="project" value="TreeGrafter"/>
</dbReference>
<dbReference type="GO" id="GO:0030170">
    <property type="term" value="F:pyridoxal phosphate binding"/>
    <property type="evidence" value="ECO:0007669"/>
    <property type="project" value="InterPro"/>
</dbReference>
<dbReference type="GO" id="GO:0006535">
    <property type="term" value="P:cysteine biosynthetic process from serine"/>
    <property type="evidence" value="ECO:0007669"/>
    <property type="project" value="TreeGrafter"/>
</dbReference>
<dbReference type="GO" id="GO:0071269">
    <property type="term" value="P:L-homocysteine biosynthetic process"/>
    <property type="evidence" value="ECO:0007669"/>
    <property type="project" value="TreeGrafter"/>
</dbReference>
<dbReference type="GO" id="GO:0019346">
    <property type="term" value="P:transsulfuration"/>
    <property type="evidence" value="ECO:0007669"/>
    <property type="project" value="InterPro"/>
</dbReference>
<dbReference type="CDD" id="cd00614">
    <property type="entry name" value="CGS_like"/>
    <property type="match status" value="1"/>
</dbReference>
<dbReference type="FunFam" id="3.40.640.10:FF:000035">
    <property type="entry name" value="O-succinylhomoserine sulfhydrylase"/>
    <property type="match status" value="1"/>
</dbReference>
<dbReference type="Gene3D" id="3.90.1150.10">
    <property type="entry name" value="Aspartate Aminotransferase, domain 1"/>
    <property type="match status" value="1"/>
</dbReference>
<dbReference type="Gene3D" id="3.40.640.10">
    <property type="entry name" value="Type I PLP-dependent aspartate aminotransferase-like (Major domain)"/>
    <property type="match status" value="1"/>
</dbReference>
<dbReference type="InterPro" id="IPR000277">
    <property type="entry name" value="Cys/Met-Metab_PyrdxlP-dep_enz"/>
</dbReference>
<dbReference type="InterPro" id="IPR054542">
    <property type="entry name" value="Cys_met_metab_PP"/>
</dbReference>
<dbReference type="InterPro" id="IPR006235">
    <property type="entry name" value="OAc-hSer/O-AcSer_sulfhydrylase"/>
</dbReference>
<dbReference type="InterPro" id="IPR015424">
    <property type="entry name" value="PyrdxlP-dep_Trfase"/>
</dbReference>
<dbReference type="InterPro" id="IPR015421">
    <property type="entry name" value="PyrdxlP-dep_Trfase_major"/>
</dbReference>
<dbReference type="InterPro" id="IPR015422">
    <property type="entry name" value="PyrdxlP-dep_Trfase_small"/>
</dbReference>
<dbReference type="NCBIfam" id="TIGR01326">
    <property type="entry name" value="OAH_OAS_sulfhy"/>
    <property type="match status" value="1"/>
</dbReference>
<dbReference type="PANTHER" id="PTHR43797">
    <property type="entry name" value="HOMOCYSTEINE/CYSTEINE SYNTHASE"/>
    <property type="match status" value="1"/>
</dbReference>
<dbReference type="PANTHER" id="PTHR43797:SF2">
    <property type="entry name" value="HOMOCYSTEINE_CYSTEINE SYNTHASE"/>
    <property type="match status" value="1"/>
</dbReference>
<dbReference type="Pfam" id="PF01053">
    <property type="entry name" value="Cys_Met_Meta_PP"/>
    <property type="match status" value="1"/>
</dbReference>
<dbReference type="PIRSF" id="PIRSF001434">
    <property type="entry name" value="CGS"/>
    <property type="match status" value="1"/>
</dbReference>
<dbReference type="SUPFAM" id="SSF53383">
    <property type="entry name" value="PLP-dependent transferases"/>
    <property type="match status" value="1"/>
</dbReference>
<dbReference type="PROSITE" id="PS00868">
    <property type="entry name" value="CYS_MET_METAB_PP"/>
    <property type="match status" value="1"/>
</dbReference>
<protein>
    <recommendedName>
        <fullName evidence="13">Sulfhydrylase FUB7</fullName>
        <ecNumber evidence="15">2.5.1.-</ecNumber>
    </recommendedName>
    <alternativeName>
        <fullName evidence="13">Fusaric acid biosynthesis protein 7</fullName>
    </alternativeName>
</protein>
<comment type="function">
    <text evidence="3 12">Sulfhydrylase; part of the gene cluster that mediates the biosynthesis of fusaric acid, a mycotoxin with low to moderate toxicity to animals and humans, but with high phytotoxic properties (PubMed:25372119). L-aspartate is suggested as fusaric acid amino acid precursor that is activated and further processed to O-acetyl-L-homoserine by cluster enzymes aspartate kinase FUB3 and homoserine O-acetyltransferase FUB5, as well as enzymes of the primary metabolism (By similarity). The polyketide synthase (PKS) FUB1 generates the triketide trans-2-hexenal which is presumptively released by the hydrolase FUB4 and linked to the NRPS-bound amino acid precursor by NAD(P)-dependent dehydrogenase FUB6 (By similarity). FUB1, FUB4, and the non-canonical NRPS Fub8 may form an enzyme complex (By similarity). Further processing of the NRPS-bound intermediate might be carried out by FUB6 and the O-acetylhomoserine FUB7, enabling a spontaneous electrocyclization to close the carbon backbone of fusaric acid (By similarity). Dihydrofusaric acid is likely to be released via reduction by the thioester reductase (TR) domain of FUB8 whereupon the final oxidation to fusaric acid may (also) be performed by the FMN-dependent dehydrogenase FUB9 (By similarity).</text>
</comment>
<comment type="cofactor">
    <cofactor evidence="2">
        <name>pyridoxal 5'-phosphate</name>
        <dbReference type="ChEBI" id="CHEBI:597326"/>
    </cofactor>
</comment>
<comment type="pathway">
    <text evidence="12">Mycotoxin biosynthesis.</text>
</comment>
<comment type="induction">
    <text evidence="8">Expression is positively regulated by the secondary metabolism regulator LAE1 (PubMed:22713715).</text>
</comment>
<comment type="biotechnology">
    <text evidence="4 5 6 7 9 10 11">Fusaric acid is phytotoxic to plants such as cotton and banana (PubMed:20955724, PubMed:23922960). It has been shown to induce programmed cell death in plants (PubMed:16868776, PubMed:23838885). In addition to a mild toxicity to animals, fusaric acid exhibits acanthamoebicidal, antioomycete, and antimycobacterial activities (PubMed:17927749, PubMed:21811925, PubMed:22864988).</text>
</comment>
<comment type="similarity">
    <text evidence="14">Belongs to the trans-sulfuration enzymes family.</text>
</comment>
<keyword id="KW-0663">Pyridoxal phosphate</keyword>
<keyword id="KW-1185">Reference proteome</keyword>
<keyword id="KW-0808">Transferase</keyword>
<sequence length="433" mass="47142">MAEQVFQNFETLQLHAGYTPDPHTRSTAVPIYATSSYTFNDSAHGARLFGLKELGNIYSRLMNPTVDVFEKRIAALEGGIAAAATSSGQAAQFLTIATLAKAGDNIVASSHLYGGTYNQLNVLFPRFGIKTKFVRSGKLEDYVAAIDDQTRAIYVESMSNPDYVVPDFEGIAKIAHEHGIPLVVDNTLGAGGYYIRPIEHGADIVVHSATKWIGGHGTTIGGVIVDSGRFNWNKHSDRFPEMVEPSPSYHGLKYWEAFGPATFITRIRVEMLRDIGACLSPFSAQQLLLGIETLGLRAERHAQNTEKLAKYFESSPNVSWVLWPGSESHPTYAQAKKYLTRGFGAMLSIGVKGDASAGSKVVDGLKLVSNLANVGDAKSLAIHPWSTTHEQLSEDERLASGVTEDMIRISVGIEHVDDIIADFEQSFQKAYGA</sequence>
<gene>
    <name evidence="13" type="primary">FUB7</name>
    <name type="ORF">FVEG_12529</name>
</gene>
<reference key="1">
    <citation type="journal article" date="2010" name="Nature">
        <title>Comparative genomics reveals mobile pathogenicity chromosomes in Fusarium.</title>
        <authorList>
            <person name="Ma L.-J."/>
            <person name="van der Does H.C."/>
            <person name="Borkovich K.A."/>
            <person name="Coleman J.J."/>
            <person name="Daboussi M.-J."/>
            <person name="Di Pietro A."/>
            <person name="Dufresne M."/>
            <person name="Freitag M."/>
            <person name="Grabherr M."/>
            <person name="Henrissat B."/>
            <person name="Houterman P.M."/>
            <person name="Kang S."/>
            <person name="Shim W.-B."/>
            <person name="Woloshuk C."/>
            <person name="Xie X."/>
            <person name="Xu J.-R."/>
            <person name="Antoniw J."/>
            <person name="Baker S.E."/>
            <person name="Bluhm B.H."/>
            <person name="Breakspear A."/>
            <person name="Brown D.W."/>
            <person name="Butchko R.A.E."/>
            <person name="Chapman S."/>
            <person name="Coulson R."/>
            <person name="Coutinho P.M."/>
            <person name="Danchin E.G.J."/>
            <person name="Diener A."/>
            <person name="Gale L.R."/>
            <person name="Gardiner D.M."/>
            <person name="Goff S."/>
            <person name="Hammond-Kosack K.E."/>
            <person name="Hilburn K."/>
            <person name="Hua-Van A."/>
            <person name="Jonkers W."/>
            <person name="Kazan K."/>
            <person name="Kodira C.D."/>
            <person name="Koehrsen M."/>
            <person name="Kumar L."/>
            <person name="Lee Y.-H."/>
            <person name="Li L."/>
            <person name="Manners J.M."/>
            <person name="Miranda-Saavedra D."/>
            <person name="Mukherjee M."/>
            <person name="Park G."/>
            <person name="Park J."/>
            <person name="Park S.-Y."/>
            <person name="Proctor R.H."/>
            <person name="Regev A."/>
            <person name="Ruiz-Roldan M.C."/>
            <person name="Sain D."/>
            <person name="Sakthikumar S."/>
            <person name="Sykes S."/>
            <person name="Schwartz D.C."/>
            <person name="Turgeon B.G."/>
            <person name="Wapinski I."/>
            <person name="Yoder O."/>
            <person name="Young S."/>
            <person name="Zeng Q."/>
            <person name="Zhou S."/>
            <person name="Galagan J."/>
            <person name="Cuomo C.A."/>
            <person name="Kistler H.C."/>
            <person name="Rep M."/>
        </authorList>
    </citation>
    <scope>NUCLEOTIDE SEQUENCE [LARGE SCALE GENOMIC DNA]</scope>
    <source>
        <strain>M3125 / FGSC 7600</strain>
    </source>
</reference>
<reference key="2">
    <citation type="journal article" date="2006" name="Planta">
        <title>Fusaric acid induces apoptosis in saffron root-tip cells: roles of caspase-like activity, cytochrome c, and H2O2.</title>
        <authorList>
            <person name="Samadi L."/>
            <person name="Shahsavan Behboodi B."/>
        </authorList>
    </citation>
    <scope>BIOTECHNOLOGY</scope>
</reference>
<reference key="3">
    <citation type="journal article" date="2008" name="J. Appl. Microbiol.">
        <title>Bikaverin and fusaric acid from Fusarium oxysporum show antioomycete activity against Phytophthora infestans.</title>
        <authorList>
            <person name="Son S.W."/>
            <person name="Kim H.Y."/>
            <person name="Choi G.J."/>
            <person name="Lim H.K."/>
            <person name="Jang K.S."/>
            <person name="Lee S.O."/>
            <person name="Lee S."/>
            <person name="Sung N.D."/>
            <person name="Kim J.C."/>
        </authorList>
    </citation>
    <scope>BIOTECHNOLOGY</scope>
</reference>
<reference key="4">
    <citation type="journal article" date="2011" name="Arch. Pharm. Res.">
        <title>Antimycobacterial activity of fusaric acid from a mangrove endophyte and its metal complexes.</title>
        <authorList>
            <person name="Pan J.H."/>
            <person name="Chen Y."/>
            <person name="Huang Y.H."/>
            <person name="Tao Y.W."/>
            <person name="Wang J."/>
            <person name="Li Y."/>
            <person name="Peng Y."/>
            <person name="Dong T."/>
            <person name="Lai X.M."/>
            <person name="Lin Y.C."/>
        </authorList>
    </citation>
    <scope>BIOTECHNOLOGY</scope>
</reference>
<reference key="5">
    <citation type="journal article" date="2011" name="Toxicon">
        <title>Phytotoxicity of fusaric acid and analogs to cotton.</title>
        <authorList>
            <person name="Stipanovic R.D."/>
            <person name="Puckhaber L.S."/>
            <person name="Liu J."/>
            <person name="Bell A.A."/>
        </authorList>
    </citation>
    <scope>BIOTECHNOLOGY</scope>
</reference>
<reference key="6">
    <citation type="journal article" date="2012" name="Fungal Genet. Biol.">
        <title>Lae1 regulates expression of multiple secondary metabolite gene clusters in Fusarium verticillioides.</title>
        <authorList>
            <person name="Butchko R.A."/>
            <person name="Brown D.W."/>
            <person name="Busman M."/>
            <person name="Tudzynski B."/>
            <person name="Wiemann P."/>
        </authorList>
    </citation>
    <scope>INDUCTION</scope>
</reference>
<reference key="7">
    <citation type="journal article" date="2012" name="Planta Med.">
        <title>In vitro acanthamoebicidal activity of fusaric acid and dehydrofusaric acid from an endophytic fungus Fusarium sp. Tlau3.</title>
        <authorList>
            <person name="Boonman N."/>
            <person name="Prachya S."/>
            <person name="Boonmee A."/>
            <person name="Kittakoop P."/>
            <person name="Wiyakrutta S."/>
            <person name="Sriubolmas N."/>
            <person name="Warit S."/>
            <person name="Dharmkrong-At Chusattayanond A."/>
        </authorList>
    </citation>
    <scope>BIOTECHNOLOGY</scope>
</reference>
<reference key="8">
    <citation type="journal article" date="2013" name="Planta">
        <title>Fusaric acid induction of programmed cell death modulated through nitric oxide signalling in tobacco suspension cells.</title>
        <authorList>
            <person name="Jiao J."/>
            <person name="Zhou B."/>
            <person name="Zhu X."/>
            <person name="Gao Z."/>
            <person name="Liang Y."/>
        </authorList>
    </citation>
    <scope>BIOTECHNOLOGY</scope>
</reference>
<reference key="9">
    <citation type="journal article" date="2013" name="PLoS ONE">
        <title>Contamination of bananas with beauvericin and fusaric acid produced by Fusarium oxysporum f. sp. cubense.</title>
        <authorList>
            <person name="Li C."/>
            <person name="Zuo C."/>
            <person name="Deng G."/>
            <person name="Kuang R."/>
            <person name="Yang Q."/>
            <person name="Hu C."/>
            <person name="Sheng O."/>
            <person name="Zhang S."/>
            <person name="Ma L."/>
            <person name="Wei Y."/>
            <person name="Yang J."/>
            <person name="Liu S."/>
            <person name="Biswas M.K."/>
            <person name="Viljoen A."/>
            <person name="Yi G."/>
        </authorList>
    </citation>
    <scope>BIOTECHNOLOGY</scope>
</reference>
<reference key="10">
    <citation type="journal article" date="2015" name="Mol. Plant Microbe Interact.">
        <title>Identification of a 12-gene fusaric acid biosynthetic gene cluster in Fusarium species through comparative and functional genomics.</title>
        <authorList>
            <person name="Brown D.W."/>
            <person name="Lee S.H."/>
            <person name="Kim L.H."/>
            <person name="Ryu J.G."/>
            <person name="Lee S."/>
            <person name="Seo Y."/>
            <person name="Kim Y.H."/>
            <person name="Busman M."/>
            <person name="Yun S.H."/>
            <person name="Proctor R.H."/>
            <person name="Lee T."/>
        </authorList>
    </citation>
    <scope>FUNCTION</scope>
    <scope>CATALYTIC ACTIVITY</scope>
</reference>
<accession>W7MS09</accession>
<organism>
    <name type="scientific">Gibberella moniliformis (strain M3125 / FGSC 7600)</name>
    <name type="common">Maize ear and stalk rot fungus</name>
    <name type="synonym">Fusarium verticillioides</name>
    <dbReference type="NCBI Taxonomy" id="334819"/>
    <lineage>
        <taxon>Eukaryota</taxon>
        <taxon>Fungi</taxon>
        <taxon>Dikarya</taxon>
        <taxon>Ascomycota</taxon>
        <taxon>Pezizomycotina</taxon>
        <taxon>Sordariomycetes</taxon>
        <taxon>Hypocreomycetidae</taxon>
        <taxon>Hypocreales</taxon>
        <taxon>Nectriaceae</taxon>
        <taxon>Fusarium</taxon>
        <taxon>Fusarium fujikuroi species complex</taxon>
    </lineage>
</organism>
<name>FUB7_GIBM7</name>